<keyword id="KW-0963">Cytoplasm</keyword>
<keyword id="KW-0312">Gluconeogenesis</keyword>
<keyword id="KW-0324">Glycolysis</keyword>
<keyword id="KW-0413">Isomerase</keyword>
<comment type="function">
    <text evidence="1">Involved in the gluconeogenesis. Catalyzes stereospecifically the conversion of dihydroxyacetone phosphate (DHAP) to D-glyceraldehyde-3-phosphate (G3P).</text>
</comment>
<comment type="catalytic activity">
    <reaction evidence="1">
        <text>D-glyceraldehyde 3-phosphate = dihydroxyacetone phosphate</text>
        <dbReference type="Rhea" id="RHEA:18585"/>
        <dbReference type="ChEBI" id="CHEBI:57642"/>
        <dbReference type="ChEBI" id="CHEBI:59776"/>
        <dbReference type="EC" id="5.3.1.1"/>
    </reaction>
</comment>
<comment type="pathway">
    <text evidence="1">Carbohydrate biosynthesis; gluconeogenesis.</text>
</comment>
<comment type="pathway">
    <text evidence="1">Carbohydrate degradation; glycolysis; D-glyceraldehyde 3-phosphate from glycerone phosphate: step 1/1.</text>
</comment>
<comment type="subunit">
    <text evidence="1">Homodimer.</text>
</comment>
<comment type="subcellular location">
    <subcellularLocation>
        <location evidence="1">Cytoplasm</location>
    </subcellularLocation>
</comment>
<comment type="similarity">
    <text evidence="1">Belongs to the triosephosphate isomerase family.</text>
</comment>
<reference key="1">
    <citation type="journal article" date="2005" name="Proc. Natl. Acad. Sci. U.S.A.">
        <title>The psychrophilic lifestyle as revealed by the genome sequence of Colwellia psychrerythraea 34H through genomic and proteomic analyses.</title>
        <authorList>
            <person name="Methe B.A."/>
            <person name="Nelson K.E."/>
            <person name="Deming J.W."/>
            <person name="Momen B."/>
            <person name="Melamud E."/>
            <person name="Zhang X."/>
            <person name="Moult J."/>
            <person name="Madupu R."/>
            <person name="Nelson W.C."/>
            <person name="Dodson R.J."/>
            <person name="Brinkac L.M."/>
            <person name="Daugherty S.C."/>
            <person name="Durkin A.S."/>
            <person name="DeBoy R.T."/>
            <person name="Kolonay J.F."/>
            <person name="Sullivan S.A."/>
            <person name="Zhou L."/>
            <person name="Davidsen T.M."/>
            <person name="Wu M."/>
            <person name="Huston A.L."/>
            <person name="Lewis M."/>
            <person name="Weaver B."/>
            <person name="Weidman J.F."/>
            <person name="Khouri H."/>
            <person name="Utterback T.R."/>
            <person name="Feldblyum T.V."/>
            <person name="Fraser C.M."/>
        </authorList>
    </citation>
    <scope>NUCLEOTIDE SEQUENCE [LARGE SCALE GENOMIC DNA]</scope>
    <source>
        <strain>34H / ATCC BAA-681</strain>
    </source>
</reference>
<name>TPIS_COLP3</name>
<evidence type="ECO:0000255" key="1">
    <source>
        <dbReference type="HAMAP-Rule" id="MF_00147"/>
    </source>
</evidence>
<gene>
    <name evidence="1" type="primary">tpiA</name>
    <name type="ordered locus">CPS_3448</name>
</gene>
<dbReference type="EC" id="5.3.1.1" evidence="1"/>
<dbReference type="EMBL" id="CP000083">
    <property type="protein sequence ID" value="AAZ27096.1"/>
    <property type="molecule type" value="Genomic_DNA"/>
</dbReference>
<dbReference type="RefSeq" id="WP_011044208.1">
    <property type="nucleotide sequence ID" value="NC_003910.7"/>
</dbReference>
<dbReference type="SMR" id="Q47YJ8"/>
<dbReference type="STRING" id="167879.CPS_3448"/>
<dbReference type="KEGG" id="cps:CPS_3448"/>
<dbReference type="eggNOG" id="COG0149">
    <property type="taxonomic scope" value="Bacteria"/>
</dbReference>
<dbReference type="HOGENOM" id="CLU_024251_2_3_6"/>
<dbReference type="UniPathway" id="UPA00109">
    <property type="reaction ID" value="UER00189"/>
</dbReference>
<dbReference type="UniPathway" id="UPA00138"/>
<dbReference type="Proteomes" id="UP000000547">
    <property type="component" value="Chromosome"/>
</dbReference>
<dbReference type="GO" id="GO:0005829">
    <property type="term" value="C:cytosol"/>
    <property type="evidence" value="ECO:0007669"/>
    <property type="project" value="TreeGrafter"/>
</dbReference>
<dbReference type="GO" id="GO:0004807">
    <property type="term" value="F:triose-phosphate isomerase activity"/>
    <property type="evidence" value="ECO:0007669"/>
    <property type="project" value="UniProtKB-UniRule"/>
</dbReference>
<dbReference type="GO" id="GO:0006094">
    <property type="term" value="P:gluconeogenesis"/>
    <property type="evidence" value="ECO:0007669"/>
    <property type="project" value="UniProtKB-UniRule"/>
</dbReference>
<dbReference type="GO" id="GO:0046166">
    <property type="term" value="P:glyceraldehyde-3-phosphate biosynthetic process"/>
    <property type="evidence" value="ECO:0007669"/>
    <property type="project" value="TreeGrafter"/>
</dbReference>
<dbReference type="GO" id="GO:0019563">
    <property type="term" value="P:glycerol catabolic process"/>
    <property type="evidence" value="ECO:0007669"/>
    <property type="project" value="TreeGrafter"/>
</dbReference>
<dbReference type="GO" id="GO:0006096">
    <property type="term" value="P:glycolytic process"/>
    <property type="evidence" value="ECO:0007669"/>
    <property type="project" value="UniProtKB-UniRule"/>
</dbReference>
<dbReference type="CDD" id="cd00311">
    <property type="entry name" value="TIM"/>
    <property type="match status" value="1"/>
</dbReference>
<dbReference type="FunFam" id="3.20.20.70:FF:000020">
    <property type="entry name" value="Triosephosphate isomerase"/>
    <property type="match status" value="1"/>
</dbReference>
<dbReference type="Gene3D" id="3.20.20.70">
    <property type="entry name" value="Aldolase class I"/>
    <property type="match status" value="1"/>
</dbReference>
<dbReference type="HAMAP" id="MF_00147_B">
    <property type="entry name" value="TIM_B"/>
    <property type="match status" value="1"/>
</dbReference>
<dbReference type="InterPro" id="IPR013785">
    <property type="entry name" value="Aldolase_TIM"/>
</dbReference>
<dbReference type="InterPro" id="IPR035990">
    <property type="entry name" value="TIM_sf"/>
</dbReference>
<dbReference type="InterPro" id="IPR022896">
    <property type="entry name" value="TrioseP_Isoase_bac/euk"/>
</dbReference>
<dbReference type="InterPro" id="IPR000652">
    <property type="entry name" value="Triosephosphate_isomerase"/>
</dbReference>
<dbReference type="InterPro" id="IPR020861">
    <property type="entry name" value="Triosephosphate_isomerase_AS"/>
</dbReference>
<dbReference type="NCBIfam" id="TIGR00419">
    <property type="entry name" value="tim"/>
    <property type="match status" value="1"/>
</dbReference>
<dbReference type="PANTHER" id="PTHR21139">
    <property type="entry name" value="TRIOSEPHOSPHATE ISOMERASE"/>
    <property type="match status" value="1"/>
</dbReference>
<dbReference type="PANTHER" id="PTHR21139:SF42">
    <property type="entry name" value="TRIOSEPHOSPHATE ISOMERASE"/>
    <property type="match status" value="1"/>
</dbReference>
<dbReference type="Pfam" id="PF00121">
    <property type="entry name" value="TIM"/>
    <property type="match status" value="1"/>
</dbReference>
<dbReference type="SUPFAM" id="SSF51351">
    <property type="entry name" value="Triosephosphate isomerase (TIM)"/>
    <property type="match status" value="1"/>
</dbReference>
<dbReference type="PROSITE" id="PS00171">
    <property type="entry name" value="TIM_1"/>
    <property type="match status" value="1"/>
</dbReference>
<dbReference type="PROSITE" id="PS51440">
    <property type="entry name" value="TIM_2"/>
    <property type="match status" value="1"/>
</dbReference>
<organism>
    <name type="scientific">Colwellia psychrerythraea (strain 34H / ATCC BAA-681)</name>
    <name type="common">Vibrio psychroerythus</name>
    <dbReference type="NCBI Taxonomy" id="167879"/>
    <lineage>
        <taxon>Bacteria</taxon>
        <taxon>Pseudomonadati</taxon>
        <taxon>Pseudomonadota</taxon>
        <taxon>Gammaproteobacteria</taxon>
        <taxon>Alteromonadales</taxon>
        <taxon>Colwelliaceae</taxon>
        <taxon>Colwellia</taxon>
    </lineage>
</organism>
<sequence length="256" mass="27335">MTRQAIVAANWKMNGDSALVDTMVSGLADIELSSHVDVVICPSFPYLSELNQKIKAANLNEAIHVGSQNVSEHESGAYTGEVSTAMLQNLAINYVIVGHSERRSIFKETSTQVAKKVHAALNAGLTPILCIGESEAERATGETETVLSAQIQPVIDEIGIEKFKDVVIAYEPVWAIGTGKTASSAMAQETHQFIRKFLAQQNEQVADKVPLLYGGSVNAANCEELFAQTDIDGGLIGGASLKAEQFKIICSAAKGK</sequence>
<accession>Q47YJ8</accession>
<proteinExistence type="inferred from homology"/>
<feature type="chain" id="PRO_1000096490" description="Triosephosphate isomerase">
    <location>
        <begin position="1"/>
        <end position="256"/>
    </location>
</feature>
<feature type="active site" description="Electrophile" evidence="1">
    <location>
        <position position="99"/>
    </location>
</feature>
<feature type="active site" description="Proton acceptor" evidence="1">
    <location>
        <position position="171"/>
    </location>
</feature>
<feature type="binding site" evidence="1">
    <location>
        <begin position="10"/>
        <end position="12"/>
    </location>
    <ligand>
        <name>substrate</name>
    </ligand>
</feature>
<feature type="binding site" evidence="1">
    <location>
        <position position="177"/>
    </location>
    <ligand>
        <name>substrate</name>
    </ligand>
</feature>
<feature type="binding site" evidence="1">
    <location>
        <position position="216"/>
    </location>
    <ligand>
        <name>substrate</name>
    </ligand>
</feature>
<feature type="binding site" evidence="1">
    <location>
        <begin position="237"/>
        <end position="238"/>
    </location>
    <ligand>
        <name>substrate</name>
    </ligand>
</feature>
<protein>
    <recommendedName>
        <fullName evidence="1">Triosephosphate isomerase</fullName>
        <shortName evidence="1">TIM</shortName>
        <shortName evidence="1">TPI</shortName>
        <ecNumber evidence="1">5.3.1.1</ecNumber>
    </recommendedName>
    <alternativeName>
        <fullName evidence="1">Triose-phosphate isomerase</fullName>
    </alternativeName>
</protein>